<dbReference type="EC" id="6.3.5.2" evidence="1"/>
<dbReference type="EMBL" id="AE017126">
    <property type="protein sequence ID" value="AAP99084.1"/>
    <property type="molecule type" value="Genomic_DNA"/>
</dbReference>
<dbReference type="RefSeq" id="NP_874432.1">
    <property type="nucleotide sequence ID" value="NC_005042.1"/>
</dbReference>
<dbReference type="RefSeq" id="WP_011124193.1">
    <property type="nucleotide sequence ID" value="NC_005042.1"/>
</dbReference>
<dbReference type="SMR" id="Q7VEH5"/>
<dbReference type="STRING" id="167539.Pro_0038"/>
<dbReference type="MEROPS" id="C26.957"/>
<dbReference type="EnsemblBacteria" id="AAP99084">
    <property type="protein sequence ID" value="AAP99084"/>
    <property type="gene ID" value="Pro_0038"/>
</dbReference>
<dbReference type="KEGG" id="pma:Pro_0038"/>
<dbReference type="PATRIC" id="fig|167539.5.peg.38"/>
<dbReference type="eggNOG" id="COG0519">
    <property type="taxonomic scope" value="Bacteria"/>
</dbReference>
<dbReference type="HOGENOM" id="CLU_014340_0_5_3"/>
<dbReference type="OrthoDB" id="9802219at2"/>
<dbReference type="UniPathway" id="UPA00189">
    <property type="reaction ID" value="UER00296"/>
</dbReference>
<dbReference type="Proteomes" id="UP000001420">
    <property type="component" value="Chromosome"/>
</dbReference>
<dbReference type="GO" id="GO:0005829">
    <property type="term" value="C:cytosol"/>
    <property type="evidence" value="ECO:0007669"/>
    <property type="project" value="TreeGrafter"/>
</dbReference>
<dbReference type="GO" id="GO:0005524">
    <property type="term" value="F:ATP binding"/>
    <property type="evidence" value="ECO:0007669"/>
    <property type="project" value="UniProtKB-UniRule"/>
</dbReference>
<dbReference type="GO" id="GO:0003921">
    <property type="term" value="F:GMP synthase activity"/>
    <property type="evidence" value="ECO:0007669"/>
    <property type="project" value="InterPro"/>
</dbReference>
<dbReference type="CDD" id="cd01742">
    <property type="entry name" value="GATase1_GMP_Synthase"/>
    <property type="match status" value="1"/>
</dbReference>
<dbReference type="CDD" id="cd01997">
    <property type="entry name" value="GMP_synthase_C"/>
    <property type="match status" value="1"/>
</dbReference>
<dbReference type="FunFam" id="3.30.300.10:FF:000002">
    <property type="entry name" value="GMP synthase [glutamine-hydrolyzing]"/>
    <property type="match status" value="1"/>
</dbReference>
<dbReference type="FunFam" id="3.40.50.620:FF:000001">
    <property type="entry name" value="GMP synthase [glutamine-hydrolyzing]"/>
    <property type="match status" value="1"/>
</dbReference>
<dbReference type="FunFam" id="3.40.50.880:FF:000001">
    <property type="entry name" value="GMP synthase [glutamine-hydrolyzing]"/>
    <property type="match status" value="1"/>
</dbReference>
<dbReference type="Gene3D" id="3.30.300.10">
    <property type="match status" value="1"/>
</dbReference>
<dbReference type="Gene3D" id="3.40.50.880">
    <property type="match status" value="1"/>
</dbReference>
<dbReference type="Gene3D" id="3.40.50.620">
    <property type="entry name" value="HUPs"/>
    <property type="match status" value="1"/>
</dbReference>
<dbReference type="HAMAP" id="MF_00344">
    <property type="entry name" value="GMP_synthase"/>
    <property type="match status" value="1"/>
</dbReference>
<dbReference type="InterPro" id="IPR029062">
    <property type="entry name" value="Class_I_gatase-like"/>
</dbReference>
<dbReference type="InterPro" id="IPR017926">
    <property type="entry name" value="GATASE"/>
</dbReference>
<dbReference type="InterPro" id="IPR001674">
    <property type="entry name" value="GMP_synth_C"/>
</dbReference>
<dbReference type="InterPro" id="IPR004739">
    <property type="entry name" value="GMP_synth_GATase"/>
</dbReference>
<dbReference type="InterPro" id="IPR022955">
    <property type="entry name" value="GMP_synthase"/>
</dbReference>
<dbReference type="InterPro" id="IPR025777">
    <property type="entry name" value="GMPS_ATP_PPase_dom"/>
</dbReference>
<dbReference type="InterPro" id="IPR022310">
    <property type="entry name" value="NAD/GMP_synthase"/>
</dbReference>
<dbReference type="InterPro" id="IPR014729">
    <property type="entry name" value="Rossmann-like_a/b/a_fold"/>
</dbReference>
<dbReference type="NCBIfam" id="TIGR00884">
    <property type="entry name" value="guaA_Cterm"/>
    <property type="match status" value="1"/>
</dbReference>
<dbReference type="NCBIfam" id="TIGR00888">
    <property type="entry name" value="guaA_Nterm"/>
    <property type="match status" value="1"/>
</dbReference>
<dbReference type="NCBIfam" id="NF000848">
    <property type="entry name" value="PRK00074.1"/>
    <property type="match status" value="1"/>
</dbReference>
<dbReference type="PANTHER" id="PTHR11922:SF2">
    <property type="entry name" value="GMP SYNTHASE [GLUTAMINE-HYDROLYZING]"/>
    <property type="match status" value="1"/>
</dbReference>
<dbReference type="PANTHER" id="PTHR11922">
    <property type="entry name" value="GMP SYNTHASE-RELATED"/>
    <property type="match status" value="1"/>
</dbReference>
<dbReference type="Pfam" id="PF00117">
    <property type="entry name" value="GATase"/>
    <property type="match status" value="1"/>
</dbReference>
<dbReference type="Pfam" id="PF00958">
    <property type="entry name" value="GMP_synt_C"/>
    <property type="match status" value="1"/>
</dbReference>
<dbReference type="Pfam" id="PF02540">
    <property type="entry name" value="NAD_synthase"/>
    <property type="match status" value="1"/>
</dbReference>
<dbReference type="PRINTS" id="PR00097">
    <property type="entry name" value="ANTSNTHASEII"/>
</dbReference>
<dbReference type="PRINTS" id="PR00099">
    <property type="entry name" value="CPSGATASE"/>
</dbReference>
<dbReference type="PRINTS" id="PR00096">
    <property type="entry name" value="GATASE"/>
</dbReference>
<dbReference type="SUPFAM" id="SSF52402">
    <property type="entry name" value="Adenine nucleotide alpha hydrolases-like"/>
    <property type="match status" value="1"/>
</dbReference>
<dbReference type="SUPFAM" id="SSF52317">
    <property type="entry name" value="Class I glutamine amidotransferase-like"/>
    <property type="match status" value="1"/>
</dbReference>
<dbReference type="SUPFAM" id="SSF54810">
    <property type="entry name" value="GMP synthetase C-terminal dimerisation domain"/>
    <property type="match status" value="1"/>
</dbReference>
<dbReference type="PROSITE" id="PS51273">
    <property type="entry name" value="GATASE_TYPE_1"/>
    <property type="match status" value="1"/>
</dbReference>
<dbReference type="PROSITE" id="PS51553">
    <property type="entry name" value="GMPS_ATP_PPASE"/>
    <property type="match status" value="1"/>
</dbReference>
<sequence length="528" mass="58993">MSDPKVTTQRNPSIVILDFGSQYSELIARRIRETEVYSMVLGYNSSVEELKKLSPQGIILSGGPSSVYEEKAPLCDPSIWDLDIPILGVCYGMQVMVKQLGGLVGEAIGKAEYGKALLQVDDPTALLTNVENGSTMWMSHGDSVKQLPAGFVRLAHTTNTPDAAIACHDRRFYGVQFHPEVVHSTDGMVIIRNFVHNICRSKPDWTTNTFIDEAINDVQEKVGKKRVLLALSGGVDSSTLAFLLKKAIGNQLTCMFIDQGFMRKGEPEFLMEFFDKKFHINVEYINARDRFLDKLQGVSDPEKKRKIIGTEFIRVFEEESLRLGPFDYLAQGTLYPDVIESSGTNIDPKTGERIAVKIKSHHNVGGLPKDLQFKLVEPLRTLFKDEVRKVGRSLGLPEEIVNRHPFPGPGLAIRILGEVTKEKLNCLRDADLIVREEIADAGLYHQIWQAFAVLLPVRSVGVMGDQRTYAWPIVLRCVSSEDGMTADWSRLPNSLLEKISNRIVNEVNGVNRVVLDITSKPPGTIEWE</sequence>
<gene>
    <name evidence="1" type="primary">guaA</name>
    <name type="ordered locus">Pro_0038</name>
</gene>
<feature type="chain" id="PRO_0000140159" description="GMP synthase [glutamine-hydrolyzing]">
    <location>
        <begin position="1"/>
        <end position="528"/>
    </location>
</feature>
<feature type="domain" description="Glutamine amidotransferase type-1" evidence="1">
    <location>
        <begin position="13"/>
        <end position="204"/>
    </location>
</feature>
<feature type="domain" description="GMPS ATP-PPase" evidence="1">
    <location>
        <begin position="205"/>
        <end position="403"/>
    </location>
</feature>
<feature type="active site" description="Nucleophile" evidence="1">
    <location>
        <position position="90"/>
    </location>
</feature>
<feature type="active site" evidence="1">
    <location>
        <position position="178"/>
    </location>
</feature>
<feature type="active site" evidence="1">
    <location>
        <position position="180"/>
    </location>
</feature>
<feature type="binding site" evidence="1">
    <location>
        <begin position="232"/>
        <end position="238"/>
    </location>
    <ligand>
        <name>ATP</name>
        <dbReference type="ChEBI" id="CHEBI:30616"/>
    </ligand>
</feature>
<keyword id="KW-0067">ATP-binding</keyword>
<keyword id="KW-0315">Glutamine amidotransferase</keyword>
<keyword id="KW-0332">GMP biosynthesis</keyword>
<keyword id="KW-0436">Ligase</keyword>
<keyword id="KW-0547">Nucleotide-binding</keyword>
<keyword id="KW-0658">Purine biosynthesis</keyword>
<keyword id="KW-1185">Reference proteome</keyword>
<comment type="function">
    <text evidence="1">Catalyzes the synthesis of GMP from XMP.</text>
</comment>
<comment type="catalytic activity">
    <reaction evidence="1">
        <text>XMP + L-glutamine + ATP + H2O = GMP + L-glutamate + AMP + diphosphate + 2 H(+)</text>
        <dbReference type="Rhea" id="RHEA:11680"/>
        <dbReference type="ChEBI" id="CHEBI:15377"/>
        <dbReference type="ChEBI" id="CHEBI:15378"/>
        <dbReference type="ChEBI" id="CHEBI:29985"/>
        <dbReference type="ChEBI" id="CHEBI:30616"/>
        <dbReference type="ChEBI" id="CHEBI:33019"/>
        <dbReference type="ChEBI" id="CHEBI:57464"/>
        <dbReference type="ChEBI" id="CHEBI:58115"/>
        <dbReference type="ChEBI" id="CHEBI:58359"/>
        <dbReference type="ChEBI" id="CHEBI:456215"/>
        <dbReference type="EC" id="6.3.5.2"/>
    </reaction>
</comment>
<comment type="pathway">
    <text evidence="1">Purine metabolism; GMP biosynthesis; GMP from XMP (L-Gln route): step 1/1.</text>
</comment>
<comment type="subunit">
    <text evidence="1">Homodimer.</text>
</comment>
<protein>
    <recommendedName>
        <fullName evidence="1">GMP synthase [glutamine-hydrolyzing]</fullName>
        <ecNumber evidence="1">6.3.5.2</ecNumber>
    </recommendedName>
    <alternativeName>
        <fullName evidence="1">GMP synthetase</fullName>
    </alternativeName>
    <alternativeName>
        <fullName evidence="1">Glutamine amidotransferase</fullName>
    </alternativeName>
</protein>
<reference key="1">
    <citation type="journal article" date="2003" name="Proc. Natl. Acad. Sci. U.S.A.">
        <title>Genome sequence of the cyanobacterium Prochlorococcus marinus SS120, a nearly minimal oxyphototrophic genome.</title>
        <authorList>
            <person name="Dufresne A."/>
            <person name="Salanoubat M."/>
            <person name="Partensky F."/>
            <person name="Artiguenave F."/>
            <person name="Axmann I.M."/>
            <person name="Barbe V."/>
            <person name="Duprat S."/>
            <person name="Galperin M.Y."/>
            <person name="Koonin E.V."/>
            <person name="Le Gall F."/>
            <person name="Makarova K.S."/>
            <person name="Ostrowski M."/>
            <person name="Oztas S."/>
            <person name="Robert C."/>
            <person name="Rogozin I.B."/>
            <person name="Scanlan D.J."/>
            <person name="Tandeau de Marsac N."/>
            <person name="Weissenbach J."/>
            <person name="Wincker P."/>
            <person name="Wolf Y.I."/>
            <person name="Hess W.R."/>
        </authorList>
    </citation>
    <scope>NUCLEOTIDE SEQUENCE [LARGE SCALE GENOMIC DNA]</scope>
    <source>
        <strain>SARG / CCMP1375 / SS120</strain>
    </source>
</reference>
<name>GUAA_PROMA</name>
<organism>
    <name type="scientific">Prochlorococcus marinus (strain SARG / CCMP1375 / SS120)</name>
    <dbReference type="NCBI Taxonomy" id="167539"/>
    <lineage>
        <taxon>Bacteria</taxon>
        <taxon>Bacillati</taxon>
        <taxon>Cyanobacteriota</taxon>
        <taxon>Cyanophyceae</taxon>
        <taxon>Synechococcales</taxon>
        <taxon>Prochlorococcaceae</taxon>
        <taxon>Prochlorococcus</taxon>
    </lineage>
</organism>
<evidence type="ECO:0000255" key="1">
    <source>
        <dbReference type="HAMAP-Rule" id="MF_00344"/>
    </source>
</evidence>
<accession>Q7VEH5</accession>
<proteinExistence type="inferred from homology"/>